<evidence type="ECO:0000250" key="1"/>
<evidence type="ECO:0000250" key="2">
    <source>
        <dbReference type="UniProtKB" id="Q96DR5"/>
    </source>
</evidence>
<evidence type="ECO:0000255" key="3"/>
<evidence type="ECO:0000269" key="4">
    <source>
    </source>
</evidence>
<evidence type="ECO:0000305" key="5"/>
<reference key="1">
    <citation type="journal article" date="1985" name="Nucleic Acids Res.">
        <title>Molecular cloning of mouse PSP mRNA.</title>
        <authorList>
            <person name="Madsen H.O."/>
            <person name="Hjorth J.P."/>
        </authorList>
    </citation>
    <scope>NUCLEOTIDE SEQUENCE [MRNA]</scope>
    <source>
        <tissue>Parotid gland</tissue>
    </source>
</reference>
<reference key="2">
    <citation type="journal article" date="2005" name="Science">
        <title>The transcriptional landscape of the mammalian genome.</title>
        <authorList>
            <person name="Carninci P."/>
            <person name="Kasukawa T."/>
            <person name="Katayama S."/>
            <person name="Gough J."/>
            <person name="Frith M.C."/>
            <person name="Maeda N."/>
            <person name="Oyama R."/>
            <person name="Ravasi T."/>
            <person name="Lenhard B."/>
            <person name="Wells C."/>
            <person name="Kodzius R."/>
            <person name="Shimokawa K."/>
            <person name="Bajic V.B."/>
            <person name="Brenner S.E."/>
            <person name="Batalov S."/>
            <person name="Forrest A.R."/>
            <person name="Zavolan M."/>
            <person name="Davis M.J."/>
            <person name="Wilming L.G."/>
            <person name="Aidinis V."/>
            <person name="Allen J.E."/>
            <person name="Ambesi-Impiombato A."/>
            <person name="Apweiler R."/>
            <person name="Aturaliya R.N."/>
            <person name="Bailey T.L."/>
            <person name="Bansal M."/>
            <person name="Baxter L."/>
            <person name="Beisel K.W."/>
            <person name="Bersano T."/>
            <person name="Bono H."/>
            <person name="Chalk A.M."/>
            <person name="Chiu K.P."/>
            <person name="Choudhary V."/>
            <person name="Christoffels A."/>
            <person name="Clutterbuck D.R."/>
            <person name="Crowe M.L."/>
            <person name="Dalla E."/>
            <person name="Dalrymple B.P."/>
            <person name="de Bono B."/>
            <person name="Della Gatta G."/>
            <person name="di Bernardo D."/>
            <person name="Down T."/>
            <person name="Engstrom P."/>
            <person name="Fagiolini M."/>
            <person name="Faulkner G."/>
            <person name="Fletcher C.F."/>
            <person name="Fukushima T."/>
            <person name="Furuno M."/>
            <person name="Futaki S."/>
            <person name="Gariboldi M."/>
            <person name="Georgii-Hemming P."/>
            <person name="Gingeras T.R."/>
            <person name="Gojobori T."/>
            <person name="Green R.E."/>
            <person name="Gustincich S."/>
            <person name="Harbers M."/>
            <person name="Hayashi Y."/>
            <person name="Hensch T.K."/>
            <person name="Hirokawa N."/>
            <person name="Hill D."/>
            <person name="Huminiecki L."/>
            <person name="Iacono M."/>
            <person name="Ikeo K."/>
            <person name="Iwama A."/>
            <person name="Ishikawa T."/>
            <person name="Jakt M."/>
            <person name="Kanapin A."/>
            <person name="Katoh M."/>
            <person name="Kawasawa Y."/>
            <person name="Kelso J."/>
            <person name="Kitamura H."/>
            <person name="Kitano H."/>
            <person name="Kollias G."/>
            <person name="Krishnan S.P."/>
            <person name="Kruger A."/>
            <person name="Kummerfeld S.K."/>
            <person name="Kurochkin I.V."/>
            <person name="Lareau L.F."/>
            <person name="Lazarevic D."/>
            <person name="Lipovich L."/>
            <person name="Liu J."/>
            <person name="Liuni S."/>
            <person name="McWilliam S."/>
            <person name="Madan Babu M."/>
            <person name="Madera M."/>
            <person name="Marchionni L."/>
            <person name="Matsuda H."/>
            <person name="Matsuzawa S."/>
            <person name="Miki H."/>
            <person name="Mignone F."/>
            <person name="Miyake S."/>
            <person name="Morris K."/>
            <person name="Mottagui-Tabar S."/>
            <person name="Mulder N."/>
            <person name="Nakano N."/>
            <person name="Nakauchi H."/>
            <person name="Ng P."/>
            <person name="Nilsson R."/>
            <person name="Nishiguchi S."/>
            <person name="Nishikawa S."/>
            <person name="Nori F."/>
            <person name="Ohara O."/>
            <person name="Okazaki Y."/>
            <person name="Orlando V."/>
            <person name="Pang K.C."/>
            <person name="Pavan W.J."/>
            <person name="Pavesi G."/>
            <person name="Pesole G."/>
            <person name="Petrovsky N."/>
            <person name="Piazza S."/>
            <person name="Reed J."/>
            <person name="Reid J.F."/>
            <person name="Ring B.Z."/>
            <person name="Ringwald M."/>
            <person name="Rost B."/>
            <person name="Ruan Y."/>
            <person name="Salzberg S.L."/>
            <person name="Sandelin A."/>
            <person name="Schneider C."/>
            <person name="Schoenbach C."/>
            <person name="Sekiguchi K."/>
            <person name="Semple C.A."/>
            <person name="Seno S."/>
            <person name="Sessa L."/>
            <person name="Sheng Y."/>
            <person name="Shibata Y."/>
            <person name="Shimada H."/>
            <person name="Shimada K."/>
            <person name="Silva D."/>
            <person name="Sinclair B."/>
            <person name="Sperling S."/>
            <person name="Stupka E."/>
            <person name="Sugiura K."/>
            <person name="Sultana R."/>
            <person name="Takenaka Y."/>
            <person name="Taki K."/>
            <person name="Tammoja K."/>
            <person name="Tan S.L."/>
            <person name="Tang S."/>
            <person name="Taylor M.S."/>
            <person name="Tegner J."/>
            <person name="Teichmann S.A."/>
            <person name="Ueda H.R."/>
            <person name="van Nimwegen E."/>
            <person name="Verardo R."/>
            <person name="Wei C.L."/>
            <person name="Yagi K."/>
            <person name="Yamanishi H."/>
            <person name="Zabarovsky E."/>
            <person name="Zhu S."/>
            <person name="Zimmer A."/>
            <person name="Hide W."/>
            <person name="Bult C."/>
            <person name="Grimmond S.M."/>
            <person name="Teasdale R.D."/>
            <person name="Liu E.T."/>
            <person name="Brusic V."/>
            <person name="Quackenbush J."/>
            <person name="Wahlestedt C."/>
            <person name="Mattick J.S."/>
            <person name="Hume D.A."/>
            <person name="Kai C."/>
            <person name="Sasaki D."/>
            <person name="Tomaru Y."/>
            <person name="Fukuda S."/>
            <person name="Kanamori-Katayama M."/>
            <person name="Suzuki M."/>
            <person name="Aoki J."/>
            <person name="Arakawa T."/>
            <person name="Iida J."/>
            <person name="Imamura K."/>
            <person name="Itoh M."/>
            <person name="Kato T."/>
            <person name="Kawaji H."/>
            <person name="Kawagashira N."/>
            <person name="Kawashima T."/>
            <person name="Kojima M."/>
            <person name="Kondo S."/>
            <person name="Konno H."/>
            <person name="Nakano K."/>
            <person name="Ninomiya N."/>
            <person name="Nishio T."/>
            <person name="Okada M."/>
            <person name="Plessy C."/>
            <person name="Shibata K."/>
            <person name="Shiraki T."/>
            <person name="Suzuki S."/>
            <person name="Tagami M."/>
            <person name="Waki K."/>
            <person name="Watahiki A."/>
            <person name="Okamura-Oho Y."/>
            <person name="Suzuki H."/>
            <person name="Kawai J."/>
            <person name="Hayashizaki Y."/>
        </authorList>
    </citation>
    <scope>NUCLEOTIDE SEQUENCE [LARGE SCALE MRNA]</scope>
    <source>
        <strain>C57BL/6J</strain>
        <tissue>Tongue</tissue>
    </source>
</reference>
<reference key="3">
    <citation type="journal article" date="2009" name="PLoS Biol.">
        <title>Lineage-specific biology revealed by a finished genome assembly of the mouse.</title>
        <authorList>
            <person name="Church D.M."/>
            <person name="Goodstadt L."/>
            <person name="Hillier L.W."/>
            <person name="Zody M.C."/>
            <person name="Goldstein S."/>
            <person name="She X."/>
            <person name="Bult C.J."/>
            <person name="Agarwala R."/>
            <person name="Cherry J.L."/>
            <person name="DiCuccio M."/>
            <person name="Hlavina W."/>
            <person name="Kapustin Y."/>
            <person name="Meric P."/>
            <person name="Maglott D."/>
            <person name="Birtle Z."/>
            <person name="Marques A.C."/>
            <person name="Graves T."/>
            <person name="Zhou S."/>
            <person name="Teague B."/>
            <person name="Potamousis K."/>
            <person name="Churas C."/>
            <person name="Place M."/>
            <person name="Herschleb J."/>
            <person name="Runnheim R."/>
            <person name="Forrest D."/>
            <person name="Amos-Landgraf J."/>
            <person name="Schwartz D.C."/>
            <person name="Cheng Z."/>
            <person name="Lindblad-Toh K."/>
            <person name="Eichler E.E."/>
            <person name="Ponting C.P."/>
        </authorList>
    </citation>
    <scope>NUCLEOTIDE SEQUENCE [LARGE SCALE GENOMIC DNA]</scope>
    <source>
        <strain>C57BL/6J</strain>
    </source>
</reference>
<reference key="4">
    <citation type="journal article" date="2004" name="Genome Res.">
        <title>The status, quality, and expansion of the NIH full-length cDNA project: the Mammalian Gene Collection (MGC).</title>
        <authorList>
            <consortium name="The MGC Project Team"/>
        </authorList>
    </citation>
    <scope>NUCLEOTIDE SEQUENCE [LARGE SCALE MRNA]</scope>
    <source>
        <strain>FVB/N</strain>
        <tissue>Mammary tumor</tissue>
    </source>
</reference>
<reference key="5">
    <citation type="journal article" date="1986" name="EMBO J.">
        <title>Coordination of murine parotid secretory protein and salivary amylase expression.</title>
        <authorList>
            <person name="Poulsen K."/>
            <person name="Jakobsen B.K."/>
            <person name="Mikkelsen B.M."/>
            <person name="Harmark K."/>
            <person name="Nielsen J.T."/>
            <person name="Hjorth J.P."/>
        </authorList>
    </citation>
    <scope>NUCLEOTIDE SEQUENCE [MRNA] OF 1-87</scope>
    <source>
        <strain>C3H/HeJ</strain>
        <tissue>Spleen</tissue>
    </source>
</reference>
<reference key="6">
    <citation type="journal article" date="1998" name="Biochem. J.">
        <title>Characterization of the rat salivary-gland B1-immunoreactive proteins.</title>
        <authorList>
            <person name="Mirels L."/>
            <person name="Miranda A.J."/>
            <person name="Ball W.D."/>
        </authorList>
    </citation>
    <scope>SUBCELLULAR LOCATION</scope>
    <scope>TISSUE SPECIFICITY</scope>
</reference>
<reference key="7">
    <citation type="journal article" date="2010" name="Cell">
        <title>A tissue-specific atlas of mouse protein phosphorylation and expression.</title>
        <authorList>
            <person name="Huttlin E.L."/>
            <person name="Jedrychowski M.P."/>
            <person name="Elias J.E."/>
            <person name="Goswami T."/>
            <person name="Rad R."/>
            <person name="Beausoleil S.A."/>
            <person name="Villen J."/>
            <person name="Haas W."/>
            <person name="Sowa M.E."/>
            <person name="Gygi S.P."/>
        </authorList>
    </citation>
    <scope>IDENTIFICATION BY MASS SPECTROMETRY [LARGE SCALE ANALYSIS]</scope>
    <source>
        <tissue>Lung</tissue>
    </source>
</reference>
<protein>
    <recommendedName>
        <fullName>BPI fold-containing family A member 2</fullName>
    </recommendedName>
    <alternativeName>
        <fullName>Parotid secretory protein</fullName>
        <shortName>PSP</shortName>
    </alternativeName>
</protein>
<proteinExistence type="evidence at protein level"/>
<dbReference type="EMBL" id="X01697">
    <property type="protein sequence ID" value="CAA25846.1"/>
    <property type="molecule type" value="mRNA"/>
</dbReference>
<dbReference type="EMBL" id="M26807">
    <property type="protein sequence ID" value="AAA40009.1"/>
    <property type="molecule type" value="Genomic_DNA"/>
</dbReference>
<dbReference type="EMBL" id="M26806">
    <property type="protein sequence ID" value="AAA40009.1"/>
    <property type="status" value="JOINED"/>
    <property type="molecule type" value="Genomic_DNA"/>
</dbReference>
<dbReference type="EMBL" id="AK009032">
    <property type="protein sequence ID" value="BAB26037.1"/>
    <property type="molecule type" value="mRNA"/>
</dbReference>
<dbReference type="EMBL" id="AK009654">
    <property type="protein sequence ID" value="BAB26418.1"/>
    <property type="molecule type" value="mRNA"/>
</dbReference>
<dbReference type="EMBL" id="AK010181">
    <property type="protein sequence ID" value="BAB26753.1"/>
    <property type="molecule type" value="mRNA"/>
</dbReference>
<dbReference type="EMBL" id="AL732466">
    <property type="status" value="NOT_ANNOTATED_CDS"/>
    <property type="molecule type" value="Genomic_DNA"/>
</dbReference>
<dbReference type="EMBL" id="BC010288">
    <property type="protein sequence ID" value="AAH10288.1"/>
    <property type="molecule type" value="mRNA"/>
</dbReference>
<dbReference type="EMBL" id="BC053336">
    <property type="protein sequence ID" value="AAH53336.1"/>
    <property type="molecule type" value="mRNA"/>
</dbReference>
<dbReference type="CCDS" id="CCDS16923.1"/>
<dbReference type="PIR" id="A23031">
    <property type="entry name" value="SQMS"/>
</dbReference>
<dbReference type="RefSeq" id="NP_032979.1">
    <property type="nucleotide sequence ID" value="NM_008953.2"/>
</dbReference>
<dbReference type="SMR" id="P07743"/>
<dbReference type="FunCoup" id="P07743">
    <property type="interactions" value="73"/>
</dbReference>
<dbReference type="STRING" id="10090.ENSMUSP00000046080"/>
<dbReference type="CPTAC" id="non-CPTAC-3553"/>
<dbReference type="PaxDb" id="10090-ENSMUSP00000046080"/>
<dbReference type="PeptideAtlas" id="P07743"/>
<dbReference type="ProteomicsDB" id="281702"/>
<dbReference type="Antibodypedia" id="25522">
    <property type="antibodies" value="191 antibodies from 23 providers"/>
</dbReference>
<dbReference type="Ensembl" id="ENSMUST00000048103.9">
    <property type="protein sequence ID" value="ENSMUSP00000046080.3"/>
    <property type="gene ID" value="ENSMUSG00000042459.9"/>
</dbReference>
<dbReference type="GeneID" id="19194"/>
<dbReference type="KEGG" id="mmu:19194"/>
<dbReference type="UCSC" id="uc008nis.1">
    <property type="organism name" value="mouse"/>
</dbReference>
<dbReference type="AGR" id="MGI:97787"/>
<dbReference type="CTD" id="140683"/>
<dbReference type="MGI" id="MGI:97787">
    <property type="gene designation" value="Bpifa2"/>
</dbReference>
<dbReference type="VEuPathDB" id="HostDB:ENSMUSG00000042459"/>
<dbReference type="eggNOG" id="ENOG502TE6F">
    <property type="taxonomic scope" value="Eukaryota"/>
</dbReference>
<dbReference type="GeneTree" id="ENSGT01100000263546"/>
<dbReference type="InParanoid" id="P07743"/>
<dbReference type="OMA" id="CPLIHLL"/>
<dbReference type="OrthoDB" id="9838142at2759"/>
<dbReference type="PhylomeDB" id="P07743"/>
<dbReference type="TreeFam" id="TF337052"/>
<dbReference type="Reactome" id="R-MMU-6803157">
    <property type="pathway name" value="Antimicrobial peptides"/>
</dbReference>
<dbReference type="BioGRID-ORCS" id="19194">
    <property type="hits" value="0 hits in 77 CRISPR screens"/>
</dbReference>
<dbReference type="ChiTaRS" id="Bpifa2">
    <property type="organism name" value="mouse"/>
</dbReference>
<dbReference type="PRO" id="PR:P07743"/>
<dbReference type="Proteomes" id="UP000000589">
    <property type="component" value="Chromosome 2"/>
</dbReference>
<dbReference type="RNAct" id="P07743">
    <property type="molecule type" value="protein"/>
</dbReference>
<dbReference type="Bgee" id="ENSMUSG00000042459">
    <property type="expression patterns" value="Expressed in parotid gland and 36 other cell types or tissues"/>
</dbReference>
<dbReference type="ExpressionAtlas" id="P07743">
    <property type="expression patterns" value="baseline and differential"/>
</dbReference>
<dbReference type="GO" id="GO:0005615">
    <property type="term" value="C:extracellular space"/>
    <property type="evidence" value="ECO:0000314"/>
    <property type="project" value="MGI"/>
</dbReference>
<dbReference type="GO" id="GO:0008289">
    <property type="term" value="F:lipid binding"/>
    <property type="evidence" value="ECO:0007669"/>
    <property type="project" value="InterPro"/>
</dbReference>
<dbReference type="GO" id="GO:0042742">
    <property type="term" value="P:defense response to bacterium"/>
    <property type="evidence" value="ECO:0007669"/>
    <property type="project" value="UniProtKB-KW"/>
</dbReference>
<dbReference type="Gene3D" id="3.15.10.10">
    <property type="entry name" value="Bactericidal permeability-increasing protein, domain 1"/>
    <property type="match status" value="1"/>
</dbReference>
<dbReference type="InterPro" id="IPR017943">
    <property type="entry name" value="Bactericidal_perm-incr_a/b_dom"/>
</dbReference>
<dbReference type="InterPro" id="IPR052507">
    <property type="entry name" value="BPI_fold-antibacterial"/>
</dbReference>
<dbReference type="InterPro" id="IPR017942">
    <property type="entry name" value="Lipid-bd_serum_glycop_N"/>
</dbReference>
<dbReference type="PANTHER" id="PTHR47145">
    <property type="entry name" value="BPI FOLD-CONTAINING FAMILY A MEMBER 2"/>
    <property type="match status" value="1"/>
</dbReference>
<dbReference type="PANTHER" id="PTHR47145:SF1">
    <property type="entry name" value="BPI FOLD-CONTAINING FAMILY A MEMBER 2"/>
    <property type="match status" value="1"/>
</dbReference>
<dbReference type="Pfam" id="PF01273">
    <property type="entry name" value="LBP_BPI_CETP"/>
    <property type="match status" value="1"/>
</dbReference>
<dbReference type="SUPFAM" id="SSF55394">
    <property type="entry name" value="Bactericidal permeability-increasing protein, BPI"/>
    <property type="match status" value="1"/>
</dbReference>
<gene>
    <name type="primary">Bpifa2</name>
    <name type="synonym">Psp</name>
</gene>
<accession>P07743</accession>
<accession>A2AIF8</accession>
<accession>Q9D734</accession>
<name>BPIA2_MOUSE</name>
<sequence>MFQLGSLVVLCGLLIGNSESLLGELGSAVNNLKILNPPSEAVPQNLNLDVELLQQATSWPLAKNSILETLNTADLGNLKSFTSLNGLLLKINNLKVLDFQAKLSSNGNGIDLTVPLAGEASLVLPFIGKTVDISVSLDLINSLSIKTNAQTGLPEVTIGKCSSNTDKISISLLGRRLPIINSILDGVSTLLTSTLSTVLQNFLCPLLQYVLSTLNPSVLQGLLSNLLAGQVQLAL</sequence>
<organism>
    <name type="scientific">Mus musculus</name>
    <name type="common">Mouse</name>
    <dbReference type="NCBI Taxonomy" id="10090"/>
    <lineage>
        <taxon>Eukaryota</taxon>
        <taxon>Metazoa</taxon>
        <taxon>Chordata</taxon>
        <taxon>Craniata</taxon>
        <taxon>Vertebrata</taxon>
        <taxon>Euteleostomi</taxon>
        <taxon>Mammalia</taxon>
        <taxon>Eutheria</taxon>
        <taxon>Euarchontoglires</taxon>
        <taxon>Glires</taxon>
        <taxon>Rodentia</taxon>
        <taxon>Myomorpha</taxon>
        <taxon>Muroidea</taxon>
        <taxon>Muridae</taxon>
        <taxon>Murinae</taxon>
        <taxon>Mus</taxon>
        <taxon>Mus</taxon>
    </lineage>
</organism>
<comment type="function">
    <text evidence="2">Has strong antibacterial activity against P.aeruginosa.</text>
</comment>
<comment type="subcellular location">
    <subcellularLocation>
        <location evidence="4">Secreted</location>
    </subcellularLocation>
</comment>
<comment type="tissue specificity">
    <text evidence="4">Predominates in the parotid glands, present in smaller amounts (1/10) in the submaxillary glands and in the sublingual glands, and at lower amount in the pancreas but undetectable in the liver. Found also in lacrimal gland.</text>
</comment>
<comment type="developmental stage">
    <text>Expressed at low levels at day 3 after birth but increased gradually with age from this time.</text>
</comment>
<comment type="similarity">
    <text evidence="5">Belongs to the BPI/LBP/Plunc superfamily. Plunc family.</text>
</comment>
<feature type="signal peptide" evidence="3">
    <location>
        <begin position="1"/>
        <end position="20"/>
    </location>
</feature>
<feature type="chain" id="PRO_0000017185" description="BPI fold-containing family A member 2">
    <location>
        <begin position="21"/>
        <end position="235"/>
    </location>
</feature>
<feature type="disulfide bond" evidence="1">
    <location>
        <begin position="161"/>
        <end position="204"/>
    </location>
</feature>
<feature type="sequence conflict" description="In Ref. 2; BAB26418." evidence="5" ref="2">
    <original>L</original>
    <variation>P</variation>
    <location>
        <position position="4"/>
    </location>
</feature>
<keyword id="KW-0044">Antibiotic</keyword>
<keyword id="KW-0929">Antimicrobial</keyword>
<keyword id="KW-1015">Disulfide bond</keyword>
<keyword id="KW-1185">Reference proteome</keyword>
<keyword id="KW-0964">Secreted</keyword>
<keyword id="KW-0732">Signal</keyword>